<name>ENO_TROW8</name>
<organism>
    <name type="scientific">Tropheryma whipplei (strain TW08/27)</name>
    <name type="common">Whipple's bacillus</name>
    <dbReference type="NCBI Taxonomy" id="218496"/>
    <lineage>
        <taxon>Bacteria</taxon>
        <taxon>Bacillati</taxon>
        <taxon>Actinomycetota</taxon>
        <taxon>Actinomycetes</taxon>
        <taxon>Micrococcales</taxon>
        <taxon>Tropherymataceae</taxon>
        <taxon>Tropheryma</taxon>
    </lineage>
</organism>
<evidence type="ECO:0000255" key="1">
    <source>
        <dbReference type="HAMAP-Rule" id="MF_00318"/>
    </source>
</evidence>
<dbReference type="EC" id="4.2.1.11" evidence="1"/>
<dbReference type="EMBL" id="BX251412">
    <property type="protein sequence ID" value="CAD67452.1"/>
    <property type="molecule type" value="Genomic_DNA"/>
</dbReference>
<dbReference type="RefSeq" id="WP_011096730.1">
    <property type="nucleotide sequence ID" value="NC_004551.1"/>
</dbReference>
<dbReference type="SMR" id="Q83H73"/>
<dbReference type="GeneID" id="67388574"/>
<dbReference type="KEGG" id="tws:TW793"/>
<dbReference type="HOGENOM" id="CLU_031223_2_1_11"/>
<dbReference type="UniPathway" id="UPA00109">
    <property type="reaction ID" value="UER00187"/>
</dbReference>
<dbReference type="GO" id="GO:0009986">
    <property type="term" value="C:cell surface"/>
    <property type="evidence" value="ECO:0007669"/>
    <property type="project" value="UniProtKB-SubCell"/>
</dbReference>
<dbReference type="GO" id="GO:0005576">
    <property type="term" value="C:extracellular region"/>
    <property type="evidence" value="ECO:0007669"/>
    <property type="project" value="UniProtKB-SubCell"/>
</dbReference>
<dbReference type="GO" id="GO:0000015">
    <property type="term" value="C:phosphopyruvate hydratase complex"/>
    <property type="evidence" value="ECO:0007669"/>
    <property type="project" value="InterPro"/>
</dbReference>
<dbReference type="GO" id="GO:0000287">
    <property type="term" value="F:magnesium ion binding"/>
    <property type="evidence" value="ECO:0007669"/>
    <property type="project" value="UniProtKB-UniRule"/>
</dbReference>
<dbReference type="GO" id="GO:0004634">
    <property type="term" value="F:phosphopyruvate hydratase activity"/>
    <property type="evidence" value="ECO:0007669"/>
    <property type="project" value="UniProtKB-UniRule"/>
</dbReference>
<dbReference type="GO" id="GO:0006096">
    <property type="term" value="P:glycolytic process"/>
    <property type="evidence" value="ECO:0007669"/>
    <property type="project" value="UniProtKB-UniRule"/>
</dbReference>
<dbReference type="CDD" id="cd03313">
    <property type="entry name" value="enolase"/>
    <property type="match status" value="1"/>
</dbReference>
<dbReference type="FunFam" id="3.20.20.120:FF:000001">
    <property type="entry name" value="Enolase"/>
    <property type="match status" value="1"/>
</dbReference>
<dbReference type="FunFam" id="3.30.390.10:FF:000001">
    <property type="entry name" value="Enolase"/>
    <property type="match status" value="1"/>
</dbReference>
<dbReference type="Gene3D" id="3.20.20.120">
    <property type="entry name" value="Enolase-like C-terminal domain"/>
    <property type="match status" value="1"/>
</dbReference>
<dbReference type="Gene3D" id="3.30.390.10">
    <property type="entry name" value="Enolase-like, N-terminal domain"/>
    <property type="match status" value="1"/>
</dbReference>
<dbReference type="HAMAP" id="MF_00318">
    <property type="entry name" value="Enolase"/>
    <property type="match status" value="1"/>
</dbReference>
<dbReference type="InterPro" id="IPR000941">
    <property type="entry name" value="Enolase"/>
</dbReference>
<dbReference type="InterPro" id="IPR036849">
    <property type="entry name" value="Enolase-like_C_sf"/>
</dbReference>
<dbReference type="InterPro" id="IPR029017">
    <property type="entry name" value="Enolase-like_N"/>
</dbReference>
<dbReference type="InterPro" id="IPR020810">
    <property type="entry name" value="Enolase_C"/>
</dbReference>
<dbReference type="InterPro" id="IPR020809">
    <property type="entry name" value="Enolase_CS"/>
</dbReference>
<dbReference type="InterPro" id="IPR020811">
    <property type="entry name" value="Enolase_N"/>
</dbReference>
<dbReference type="NCBIfam" id="TIGR01060">
    <property type="entry name" value="eno"/>
    <property type="match status" value="1"/>
</dbReference>
<dbReference type="PANTHER" id="PTHR11902">
    <property type="entry name" value="ENOLASE"/>
    <property type="match status" value="1"/>
</dbReference>
<dbReference type="PANTHER" id="PTHR11902:SF1">
    <property type="entry name" value="ENOLASE"/>
    <property type="match status" value="1"/>
</dbReference>
<dbReference type="Pfam" id="PF00113">
    <property type="entry name" value="Enolase_C"/>
    <property type="match status" value="1"/>
</dbReference>
<dbReference type="Pfam" id="PF03952">
    <property type="entry name" value="Enolase_N"/>
    <property type="match status" value="1"/>
</dbReference>
<dbReference type="PIRSF" id="PIRSF001400">
    <property type="entry name" value="Enolase"/>
    <property type="match status" value="1"/>
</dbReference>
<dbReference type="PRINTS" id="PR00148">
    <property type="entry name" value="ENOLASE"/>
</dbReference>
<dbReference type="SFLD" id="SFLDS00001">
    <property type="entry name" value="Enolase"/>
    <property type="match status" value="1"/>
</dbReference>
<dbReference type="SFLD" id="SFLDF00002">
    <property type="entry name" value="enolase"/>
    <property type="match status" value="1"/>
</dbReference>
<dbReference type="SMART" id="SM01192">
    <property type="entry name" value="Enolase_C"/>
    <property type="match status" value="1"/>
</dbReference>
<dbReference type="SMART" id="SM01193">
    <property type="entry name" value="Enolase_N"/>
    <property type="match status" value="1"/>
</dbReference>
<dbReference type="SUPFAM" id="SSF51604">
    <property type="entry name" value="Enolase C-terminal domain-like"/>
    <property type="match status" value="1"/>
</dbReference>
<dbReference type="SUPFAM" id="SSF54826">
    <property type="entry name" value="Enolase N-terminal domain-like"/>
    <property type="match status" value="1"/>
</dbReference>
<dbReference type="PROSITE" id="PS00164">
    <property type="entry name" value="ENOLASE"/>
    <property type="match status" value="1"/>
</dbReference>
<proteinExistence type="inferred from homology"/>
<sequence length="428" mass="45962">MCLIDSVHARQILDSRGTPTVEVEVTLEDGSMGRSAVPSGASTGAFEAHELRDQDNNEYLGKGVTRAVRSVNSEIAPVLIGFDAFDQVGLDHRMIELDGTNNKSRLGANAILGVSLASASAAARAADLSLFRYLGGPSSRILPVPMMNIINGGAHADTGVDIQEFMILPVGARSFSESLRWGCEVYHSLKVQLRESGLSSGLGDEGGFAPALRSNRTALDLILSAIEKAGFSPGIDIVLALDIAASEFCKAPGHYRFEGKDITSDELISYYEGLLSSYPLVSIEDPLDQDDWEGYRTLTTHIGDRVQIVGDDLFVTNTSRLSRGIQSGVANSILVKVNQIGTLTETFDAVDMAAKGGYTAVLSHRSGETEDTTIADMAVATNCGQIKTGAPARGERIAKYNQLLRIEEKLGRSARYAGWLSYPRWQGK</sequence>
<reference key="1">
    <citation type="journal article" date="2003" name="Lancet">
        <title>Sequencing and analysis of the genome of the Whipple's disease bacterium Tropheryma whipplei.</title>
        <authorList>
            <person name="Bentley S.D."/>
            <person name="Maiwald M."/>
            <person name="Murphy L.D."/>
            <person name="Pallen M.J."/>
            <person name="Yeats C.A."/>
            <person name="Dover L.G."/>
            <person name="Norbertczak H.T."/>
            <person name="Besra G.S."/>
            <person name="Quail M.A."/>
            <person name="Harris D.E."/>
            <person name="von Herbay A."/>
            <person name="Goble A."/>
            <person name="Rutter S."/>
            <person name="Squares R."/>
            <person name="Squares S."/>
            <person name="Barrell B.G."/>
            <person name="Parkhill J."/>
            <person name="Relman D.A."/>
        </authorList>
    </citation>
    <scope>NUCLEOTIDE SEQUENCE [LARGE SCALE GENOMIC DNA]</scope>
    <source>
        <strain>TW08/27</strain>
    </source>
</reference>
<protein>
    <recommendedName>
        <fullName evidence="1">Enolase</fullName>
        <ecNumber evidence="1">4.2.1.11</ecNumber>
    </recommendedName>
    <alternativeName>
        <fullName evidence="1">2-phospho-D-glycerate hydro-lyase</fullName>
    </alternativeName>
    <alternativeName>
        <fullName evidence="1">2-phosphoglycerate dehydratase</fullName>
    </alternativeName>
</protein>
<feature type="chain" id="PRO_0000134000" description="Enolase">
    <location>
        <begin position="1"/>
        <end position="428"/>
    </location>
</feature>
<feature type="active site" description="Proton donor" evidence="1">
    <location>
        <position position="205"/>
    </location>
</feature>
<feature type="active site" description="Proton acceptor" evidence="1">
    <location>
        <position position="336"/>
    </location>
</feature>
<feature type="binding site" evidence="1">
    <location>
        <position position="163"/>
    </location>
    <ligand>
        <name>(2R)-2-phosphoglycerate</name>
        <dbReference type="ChEBI" id="CHEBI:58289"/>
    </ligand>
</feature>
<feature type="binding site" evidence="1">
    <location>
        <position position="242"/>
    </location>
    <ligand>
        <name>Mg(2+)</name>
        <dbReference type="ChEBI" id="CHEBI:18420"/>
    </ligand>
</feature>
<feature type="binding site" evidence="1">
    <location>
        <position position="284"/>
    </location>
    <ligand>
        <name>Mg(2+)</name>
        <dbReference type="ChEBI" id="CHEBI:18420"/>
    </ligand>
</feature>
<feature type="binding site" evidence="1">
    <location>
        <position position="311"/>
    </location>
    <ligand>
        <name>Mg(2+)</name>
        <dbReference type="ChEBI" id="CHEBI:18420"/>
    </ligand>
</feature>
<feature type="binding site" evidence="1">
    <location>
        <position position="336"/>
    </location>
    <ligand>
        <name>(2R)-2-phosphoglycerate</name>
        <dbReference type="ChEBI" id="CHEBI:58289"/>
    </ligand>
</feature>
<feature type="binding site" evidence="1">
    <location>
        <position position="365"/>
    </location>
    <ligand>
        <name>(2R)-2-phosphoglycerate</name>
        <dbReference type="ChEBI" id="CHEBI:58289"/>
    </ligand>
</feature>
<feature type="binding site" evidence="1">
    <location>
        <position position="366"/>
    </location>
    <ligand>
        <name>(2R)-2-phosphoglycerate</name>
        <dbReference type="ChEBI" id="CHEBI:58289"/>
    </ligand>
</feature>
<feature type="binding site" evidence="1">
    <location>
        <position position="387"/>
    </location>
    <ligand>
        <name>(2R)-2-phosphoglycerate</name>
        <dbReference type="ChEBI" id="CHEBI:58289"/>
    </ligand>
</feature>
<keyword id="KW-0963">Cytoplasm</keyword>
<keyword id="KW-0324">Glycolysis</keyword>
<keyword id="KW-0456">Lyase</keyword>
<keyword id="KW-0460">Magnesium</keyword>
<keyword id="KW-0479">Metal-binding</keyword>
<keyword id="KW-0964">Secreted</keyword>
<comment type="function">
    <text evidence="1">Catalyzes the reversible conversion of 2-phosphoglycerate (2-PG) into phosphoenolpyruvate (PEP). It is essential for the degradation of carbohydrates via glycolysis.</text>
</comment>
<comment type="catalytic activity">
    <reaction evidence="1">
        <text>(2R)-2-phosphoglycerate = phosphoenolpyruvate + H2O</text>
        <dbReference type="Rhea" id="RHEA:10164"/>
        <dbReference type="ChEBI" id="CHEBI:15377"/>
        <dbReference type="ChEBI" id="CHEBI:58289"/>
        <dbReference type="ChEBI" id="CHEBI:58702"/>
        <dbReference type="EC" id="4.2.1.11"/>
    </reaction>
</comment>
<comment type="cofactor">
    <cofactor evidence="1">
        <name>Mg(2+)</name>
        <dbReference type="ChEBI" id="CHEBI:18420"/>
    </cofactor>
    <text evidence="1">Binds a second Mg(2+) ion via substrate during catalysis.</text>
</comment>
<comment type="pathway">
    <text evidence="1">Carbohydrate degradation; glycolysis; pyruvate from D-glyceraldehyde 3-phosphate: step 4/5.</text>
</comment>
<comment type="subcellular location">
    <subcellularLocation>
        <location evidence="1">Cytoplasm</location>
    </subcellularLocation>
    <subcellularLocation>
        <location evidence="1">Secreted</location>
    </subcellularLocation>
    <subcellularLocation>
        <location evidence="1">Cell surface</location>
    </subcellularLocation>
    <text evidence="1">Fractions of enolase are present in both the cytoplasm and on the cell surface.</text>
</comment>
<comment type="similarity">
    <text evidence="1">Belongs to the enolase family.</text>
</comment>
<accession>Q83H73</accession>
<gene>
    <name evidence="1" type="primary">eno</name>
    <name type="ordered locus">TW793</name>
</gene>